<accession>A9N2H6</accession>
<evidence type="ECO:0000255" key="1">
    <source>
        <dbReference type="HAMAP-Rule" id="MF_01104"/>
    </source>
</evidence>
<feature type="chain" id="PRO_1000084803" description="Protein Syd">
    <location>
        <begin position="1"/>
        <end position="181"/>
    </location>
</feature>
<proteinExistence type="inferred from homology"/>
<keyword id="KW-0997">Cell inner membrane</keyword>
<keyword id="KW-1003">Cell membrane</keyword>
<keyword id="KW-0472">Membrane</keyword>
<organism>
    <name type="scientific">Salmonella paratyphi B (strain ATCC BAA-1250 / SPB7)</name>
    <dbReference type="NCBI Taxonomy" id="1016998"/>
    <lineage>
        <taxon>Bacteria</taxon>
        <taxon>Pseudomonadati</taxon>
        <taxon>Pseudomonadota</taxon>
        <taxon>Gammaproteobacteria</taxon>
        <taxon>Enterobacterales</taxon>
        <taxon>Enterobacteriaceae</taxon>
        <taxon>Salmonella</taxon>
    </lineage>
</organism>
<comment type="function">
    <text evidence="1">Interacts with the SecY protein in vivo. May bind preferentially to an uncomplexed state of SecY, thus functioning either as a chelating agent for excess SecY in the cell or as a regulatory factor that negatively controls the translocase function.</text>
</comment>
<comment type="subcellular location">
    <subcellularLocation>
        <location evidence="1">Cell inner membrane</location>
        <topology evidence="1">Peripheral membrane protein</topology>
        <orientation evidence="1">Cytoplasmic side</orientation>
    </subcellularLocation>
    <text evidence="1">Loosely associated with the cytoplasmic side of the inner membrane, probably via SecY.</text>
</comment>
<comment type="similarity">
    <text evidence="1">Belongs to the Syd family.</text>
</comment>
<sequence>MDELTAQALKAFTTRYCDAWQEKHGSWPLSEELYGVPSPCIISSTRDAVYWQPQPFEGEENVNAVERAFDIMVQPALHAFYTTQFAGDMPAQFADEKLTLLQTWSQDDFRRVQENLIGHLVTQKRLKLPPTLFIATQENELEVISVCNLSGEVIKETLGTRNRTVLAATLAEFLTQLNPLL</sequence>
<reference key="1">
    <citation type="submission" date="2007-11" db="EMBL/GenBank/DDBJ databases">
        <authorList>
            <consortium name="The Salmonella enterica serovar Paratyphi B Genome Sequencing Project"/>
            <person name="McClelland M."/>
            <person name="Sanderson E.K."/>
            <person name="Porwollik S."/>
            <person name="Spieth J."/>
            <person name="Clifton W.S."/>
            <person name="Fulton R."/>
            <person name="Cordes M."/>
            <person name="Wollam A."/>
            <person name="Shah N."/>
            <person name="Pepin K."/>
            <person name="Bhonagiri V."/>
            <person name="Nash W."/>
            <person name="Johnson M."/>
            <person name="Thiruvilangam P."/>
            <person name="Wilson R."/>
        </authorList>
    </citation>
    <scope>NUCLEOTIDE SEQUENCE [LARGE SCALE GENOMIC DNA]</scope>
    <source>
        <strain>ATCC BAA-1250 / SPB7</strain>
    </source>
</reference>
<dbReference type="EMBL" id="CP000886">
    <property type="protein sequence ID" value="ABX69027.1"/>
    <property type="molecule type" value="Genomic_DNA"/>
</dbReference>
<dbReference type="RefSeq" id="WP_000343990.1">
    <property type="nucleotide sequence ID" value="NC_010102.1"/>
</dbReference>
<dbReference type="SMR" id="A9N2H6"/>
<dbReference type="KEGG" id="spq:SPAB_03689"/>
<dbReference type="PATRIC" id="fig|1016998.12.peg.3476"/>
<dbReference type="HOGENOM" id="CLU_121866_0_0_6"/>
<dbReference type="BioCyc" id="SENT1016998:SPAB_RS15030-MONOMER"/>
<dbReference type="Proteomes" id="UP000008556">
    <property type="component" value="Chromosome"/>
</dbReference>
<dbReference type="GO" id="GO:0009898">
    <property type="term" value="C:cytoplasmic side of plasma membrane"/>
    <property type="evidence" value="ECO:0007669"/>
    <property type="project" value="InterPro"/>
</dbReference>
<dbReference type="CDD" id="cd16323">
    <property type="entry name" value="Syd"/>
    <property type="match status" value="1"/>
</dbReference>
<dbReference type="Gene3D" id="3.40.1580.20">
    <property type="entry name" value="Syd protein"/>
    <property type="match status" value="1"/>
</dbReference>
<dbReference type="HAMAP" id="MF_01104">
    <property type="entry name" value="Syd"/>
    <property type="match status" value="1"/>
</dbReference>
<dbReference type="InterPro" id="IPR009948">
    <property type="entry name" value="Syd"/>
</dbReference>
<dbReference type="InterPro" id="IPR038228">
    <property type="entry name" value="Syd_sf"/>
</dbReference>
<dbReference type="NCBIfam" id="NF003439">
    <property type="entry name" value="PRK04968.1"/>
    <property type="match status" value="1"/>
</dbReference>
<dbReference type="Pfam" id="PF07348">
    <property type="entry name" value="Syd"/>
    <property type="match status" value="1"/>
</dbReference>
<name>SYDP_SALPB</name>
<protein>
    <recommendedName>
        <fullName evidence="1">Protein Syd</fullName>
    </recommendedName>
</protein>
<gene>
    <name evidence="1" type="primary">syd</name>
    <name type="ordered locus">SPAB_03689</name>
</gene>